<dbReference type="EC" id="3.4.22.-" evidence="6"/>
<dbReference type="EMBL" id="AF199458">
    <property type="protein sequence ID" value="AAL25651.1"/>
    <property type="molecule type" value="mRNA"/>
</dbReference>
<dbReference type="EMBL" id="AF217504">
    <property type="protein sequence ID" value="AAG09703.1"/>
    <property type="molecule type" value="mRNA"/>
</dbReference>
<dbReference type="EMBL" id="AL136599">
    <property type="protein sequence ID" value="CAB66534.1"/>
    <property type="molecule type" value="mRNA"/>
</dbReference>
<dbReference type="EMBL" id="BX537943">
    <property type="protein sequence ID" value="CAD97911.1"/>
    <property type="molecule type" value="mRNA"/>
</dbReference>
<dbReference type="EMBL" id="AC068764">
    <property type="status" value="NOT_ANNOTATED_CDS"/>
    <property type="molecule type" value="Genomic_DNA"/>
</dbReference>
<dbReference type="EMBL" id="AC073861">
    <property type="status" value="NOT_ANNOTATED_CDS"/>
    <property type="molecule type" value="Genomic_DNA"/>
</dbReference>
<dbReference type="EMBL" id="AC110994">
    <property type="status" value="NOT_ANNOTATED_CDS"/>
    <property type="molecule type" value="Genomic_DNA"/>
</dbReference>
<dbReference type="EMBL" id="BC129988">
    <property type="protein sequence ID" value="AAI29989.1"/>
    <property type="molecule type" value="mRNA"/>
</dbReference>
<dbReference type="EMBL" id="AB051494">
    <property type="protein sequence ID" value="BAB21798.1"/>
    <property type="molecule type" value="mRNA"/>
</dbReference>
<dbReference type="CCDS" id="CCDS2941.2">
    <molecule id="Q9BQF6-1"/>
</dbReference>
<dbReference type="CCDS" id="CCDS63704.1">
    <molecule id="Q9BQF6-4"/>
</dbReference>
<dbReference type="CCDS" id="CCDS63705.1">
    <molecule id="Q9BQF6-2"/>
</dbReference>
<dbReference type="CCDS" id="CCDS63706.1">
    <molecule id="Q9BQF6-5"/>
</dbReference>
<dbReference type="RefSeq" id="NP_001070671.1">
    <property type="nucleotide sequence ID" value="NM_001077203.2"/>
</dbReference>
<dbReference type="RefSeq" id="NP_001269730.1">
    <molecule id="Q9BQF6-5"/>
    <property type="nucleotide sequence ID" value="NM_001282801.2"/>
</dbReference>
<dbReference type="RefSeq" id="NP_001269731.1">
    <molecule id="Q9BQF6-2"/>
    <property type="nucleotide sequence ID" value="NM_001282802.2"/>
</dbReference>
<dbReference type="RefSeq" id="NP_001269732.1">
    <molecule id="Q9BQF6-4"/>
    <property type="nucleotide sequence ID" value="NM_001282803.2"/>
</dbReference>
<dbReference type="RefSeq" id="NP_001269733.1">
    <property type="nucleotide sequence ID" value="NM_001282804.1"/>
</dbReference>
<dbReference type="RefSeq" id="NP_065705.3">
    <molecule id="Q9BQF6-1"/>
    <property type="nucleotide sequence ID" value="NM_020654.4"/>
</dbReference>
<dbReference type="RefSeq" id="XP_016862414.1">
    <property type="nucleotide sequence ID" value="XM_017006925.1"/>
</dbReference>
<dbReference type="PDB" id="3EAY">
    <property type="method" value="X-ray"/>
    <property type="resolution" value="2.40 A"/>
    <property type="chains" value="A=728-1050"/>
</dbReference>
<dbReference type="PDB" id="7R2E">
    <property type="method" value="X-ray"/>
    <property type="resolution" value="1.74 A"/>
    <property type="chains" value="A/B=729-1050"/>
</dbReference>
<dbReference type="PDBsum" id="3EAY"/>
<dbReference type="PDBsum" id="7R2E"/>
<dbReference type="SMR" id="Q9BQF6"/>
<dbReference type="BioGRID" id="121491">
    <property type="interactions" value="28"/>
</dbReference>
<dbReference type="FunCoup" id="Q9BQF6">
    <property type="interactions" value="3880"/>
</dbReference>
<dbReference type="IntAct" id="Q9BQF6">
    <property type="interactions" value="19"/>
</dbReference>
<dbReference type="MINT" id="Q9BQF6"/>
<dbReference type="STRING" id="9606.ENSP00000377655"/>
<dbReference type="BindingDB" id="Q9BQF6"/>
<dbReference type="ChEMBL" id="CHEMBL1741213"/>
<dbReference type="MEROPS" id="C48.009"/>
<dbReference type="GlyGen" id="Q9BQF6">
    <property type="glycosylation" value="2 sites, 3 N-linked glycans (1 site), 1 O-linked glycan (1 site)"/>
</dbReference>
<dbReference type="iPTMnet" id="Q9BQF6"/>
<dbReference type="PhosphoSitePlus" id="Q9BQF6"/>
<dbReference type="SwissPalm" id="Q9BQF6"/>
<dbReference type="BioMuta" id="SENP7"/>
<dbReference type="DMDM" id="300669717"/>
<dbReference type="jPOST" id="Q9BQF6"/>
<dbReference type="MassIVE" id="Q9BQF6"/>
<dbReference type="PaxDb" id="9606-ENSP00000377655"/>
<dbReference type="PeptideAtlas" id="Q9BQF6"/>
<dbReference type="ProteomicsDB" id="78669">
    <molecule id="Q9BQF6-1"/>
</dbReference>
<dbReference type="ProteomicsDB" id="78670">
    <molecule id="Q9BQF6-2"/>
</dbReference>
<dbReference type="ProteomicsDB" id="78671">
    <molecule id="Q9BQF6-3"/>
</dbReference>
<dbReference type="ProteomicsDB" id="78672">
    <molecule id="Q9BQF6-4"/>
</dbReference>
<dbReference type="ProteomicsDB" id="78673">
    <molecule id="Q9BQF6-5"/>
</dbReference>
<dbReference type="Pumba" id="Q9BQF6"/>
<dbReference type="Antibodypedia" id="15887">
    <property type="antibodies" value="234 antibodies from 29 providers"/>
</dbReference>
<dbReference type="DNASU" id="57337"/>
<dbReference type="Ensembl" id="ENST00000314261.11">
    <molecule id="Q9BQF6-5"/>
    <property type="protein sequence ID" value="ENSP00000313624.7"/>
    <property type="gene ID" value="ENSG00000138468.16"/>
</dbReference>
<dbReference type="Ensembl" id="ENST00000348610.3">
    <molecule id="Q9BQF6-2"/>
    <property type="protein sequence ID" value="ENSP00000342159.3"/>
    <property type="gene ID" value="ENSG00000138468.16"/>
</dbReference>
<dbReference type="Ensembl" id="ENST00000394085.7">
    <molecule id="Q9BQF6-3"/>
    <property type="protein sequence ID" value="ENSP00000377647.3"/>
    <property type="gene ID" value="ENSG00000138468.16"/>
</dbReference>
<dbReference type="Ensembl" id="ENST00000394091.5">
    <molecule id="Q9BQF6-4"/>
    <property type="protein sequence ID" value="ENSP00000377651.1"/>
    <property type="gene ID" value="ENSG00000138468.16"/>
</dbReference>
<dbReference type="Ensembl" id="ENST00000394095.7">
    <molecule id="Q9BQF6-1"/>
    <property type="protein sequence ID" value="ENSP00000377655.2"/>
    <property type="gene ID" value="ENSG00000138468.16"/>
</dbReference>
<dbReference type="GeneID" id="57337"/>
<dbReference type="KEGG" id="hsa:57337"/>
<dbReference type="MANE-Select" id="ENST00000394095.7">
    <property type="protein sequence ID" value="ENSP00000377655.2"/>
    <property type="RefSeq nucleotide sequence ID" value="NM_020654.5"/>
    <property type="RefSeq protein sequence ID" value="NP_065705.3"/>
</dbReference>
<dbReference type="UCSC" id="uc003dus.5">
    <molecule id="Q9BQF6-1"/>
    <property type="organism name" value="human"/>
</dbReference>
<dbReference type="AGR" id="HGNC:30402"/>
<dbReference type="CTD" id="57337"/>
<dbReference type="DisGeNET" id="57337"/>
<dbReference type="GeneCards" id="SENP7"/>
<dbReference type="HGNC" id="HGNC:30402">
    <property type="gene designation" value="SENP7"/>
</dbReference>
<dbReference type="HPA" id="ENSG00000138468">
    <property type="expression patterns" value="Low tissue specificity"/>
</dbReference>
<dbReference type="MIM" id="612846">
    <property type="type" value="gene"/>
</dbReference>
<dbReference type="neXtProt" id="NX_Q9BQF6"/>
<dbReference type="OpenTargets" id="ENSG00000138468"/>
<dbReference type="PharmGKB" id="PA134925171"/>
<dbReference type="VEuPathDB" id="HostDB:ENSG00000138468"/>
<dbReference type="eggNOG" id="KOG0779">
    <property type="taxonomic scope" value="Eukaryota"/>
</dbReference>
<dbReference type="GeneTree" id="ENSGT00940000157308"/>
<dbReference type="HOGENOM" id="CLU_024324_1_1_1"/>
<dbReference type="InParanoid" id="Q9BQF6"/>
<dbReference type="OMA" id="EFIFLEI"/>
<dbReference type="OrthoDB" id="442460at2759"/>
<dbReference type="PAN-GO" id="Q9BQF6">
    <property type="GO annotations" value="4 GO annotations based on evolutionary models"/>
</dbReference>
<dbReference type="PhylomeDB" id="Q9BQF6"/>
<dbReference type="TreeFam" id="TF350136"/>
<dbReference type="BRENDA" id="3.4.22.B75">
    <property type="organism ID" value="2681"/>
</dbReference>
<dbReference type="PathwayCommons" id="Q9BQF6"/>
<dbReference type="SignaLink" id="Q9BQF6"/>
<dbReference type="BioGRID-ORCS" id="57337">
    <property type="hits" value="14 hits in 1162 CRISPR screens"/>
</dbReference>
<dbReference type="ChiTaRS" id="SENP7">
    <property type="organism name" value="human"/>
</dbReference>
<dbReference type="EvolutionaryTrace" id="Q9BQF6"/>
<dbReference type="GeneWiki" id="SENP7"/>
<dbReference type="GenomeRNAi" id="57337"/>
<dbReference type="Pharos" id="Q9BQF6">
    <property type="development level" value="Tchem"/>
</dbReference>
<dbReference type="PRO" id="PR:Q9BQF6"/>
<dbReference type="Proteomes" id="UP000005640">
    <property type="component" value="Chromosome 3"/>
</dbReference>
<dbReference type="RNAct" id="Q9BQF6">
    <property type="molecule type" value="protein"/>
</dbReference>
<dbReference type="Bgee" id="ENSG00000138468">
    <property type="expression patterns" value="Expressed in calcaneal tendon and 173 other cell types or tissues"/>
</dbReference>
<dbReference type="ExpressionAtlas" id="Q9BQF6">
    <property type="expression patterns" value="baseline and differential"/>
</dbReference>
<dbReference type="GO" id="GO:0005737">
    <property type="term" value="C:cytoplasm"/>
    <property type="evidence" value="ECO:0000250"/>
    <property type="project" value="UniProtKB"/>
</dbReference>
<dbReference type="GO" id="GO:0005634">
    <property type="term" value="C:nucleus"/>
    <property type="evidence" value="ECO:0000314"/>
    <property type="project" value="LIFEdb"/>
</dbReference>
<dbReference type="GO" id="GO:0099524">
    <property type="term" value="C:postsynaptic cytosol"/>
    <property type="evidence" value="ECO:0007669"/>
    <property type="project" value="Ensembl"/>
</dbReference>
<dbReference type="GO" id="GO:0099523">
    <property type="term" value="C:presynaptic cytosol"/>
    <property type="evidence" value="ECO:0007669"/>
    <property type="project" value="Ensembl"/>
</dbReference>
<dbReference type="GO" id="GO:0070139">
    <property type="term" value="F:SUMO-specific endopeptidase activity"/>
    <property type="evidence" value="ECO:0000250"/>
    <property type="project" value="UniProtKB"/>
</dbReference>
<dbReference type="GO" id="GO:0140374">
    <property type="term" value="P:antiviral innate immune response"/>
    <property type="evidence" value="ECO:0000250"/>
    <property type="project" value="UniProtKB"/>
</dbReference>
<dbReference type="GO" id="GO:0016926">
    <property type="term" value="P:protein desumoylation"/>
    <property type="evidence" value="ECO:0000250"/>
    <property type="project" value="UniProtKB"/>
</dbReference>
<dbReference type="GO" id="GO:0006508">
    <property type="term" value="P:proteolysis"/>
    <property type="evidence" value="ECO:0007669"/>
    <property type="project" value="UniProtKB-KW"/>
</dbReference>
<dbReference type="FunFam" id="1.10.418.20:FF:000001">
    <property type="entry name" value="sentrin-specific protease 6 isoform X1"/>
    <property type="match status" value="1"/>
</dbReference>
<dbReference type="FunFam" id="3.30.310.130:FF:000001">
    <property type="entry name" value="sentrin-specific protease 6 isoform X1"/>
    <property type="match status" value="1"/>
</dbReference>
<dbReference type="FunFam" id="1.10.418.20:FF:000004">
    <property type="entry name" value="sentrin-specific protease 7 isoform X1"/>
    <property type="match status" value="1"/>
</dbReference>
<dbReference type="FunFam" id="3.30.310.130:FF:000002">
    <property type="entry name" value="SUMO specific peptidase 6"/>
    <property type="match status" value="1"/>
</dbReference>
<dbReference type="Gene3D" id="1.10.418.20">
    <property type="match status" value="1"/>
</dbReference>
<dbReference type="Gene3D" id="3.30.310.130">
    <property type="entry name" value="Ubiquitin-related"/>
    <property type="match status" value="1"/>
</dbReference>
<dbReference type="InterPro" id="IPR038765">
    <property type="entry name" value="Papain-like_cys_pep_sf"/>
</dbReference>
<dbReference type="InterPro" id="IPR003653">
    <property type="entry name" value="Peptidase_C48_C"/>
</dbReference>
<dbReference type="InterPro" id="IPR051947">
    <property type="entry name" value="Sentrin-specific_protease"/>
</dbReference>
<dbReference type="PANTHER" id="PTHR46896">
    <property type="entry name" value="SENTRIN-SPECIFIC PROTEASE"/>
    <property type="match status" value="1"/>
</dbReference>
<dbReference type="PANTHER" id="PTHR46896:SF2">
    <property type="entry name" value="SENTRIN-SPECIFIC PROTEASE 7"/>
    <property type="match status" value="1"/>
</dbReference>
<dbReference type="Pfam" id="PF02902">
    <property type="entry name" value="Peptidase_C48"/>
    <property type="match status" value="1"/>
</dbReference>
<dbReference type="SUPFAM" id="SSF54001">
    <property type="entry name" value="Cysteine proteinases"/>
    <property type="match status" value="1"/>
</dbReference>
<dbReference type="PROSITE" id="PS50600">
    <property type="entry name" value="ULP_PROTEASE"/>
    <property type="match status" value="1"/>
</dbReference>
<evidence type="ECO:0000250" key="1">
    <source>
        <dbReference type="UniProtKB" id="D3ZF42"/>
    </source>
</evidence>
<evidence type="ECO:0000250" key="2">
    <source>
        <dbReference type="UniProtKB" id="Q8BUH8"/>
    </source>
</evidence>
<evidence type="ECO:0000250" key="3">
    <source>
        <dbReference type="UniProtKB" id="Q9HC62"/>
    </source>
</evidence>
<evidence type="ECO:0000256" key="4">
    <source>
        <dbReference type="SAM" id="MobiDB-lite"/>
    </source>
</evidence>
<evidence type="ECO:0000269" key="5">
    <source>
    </source>
</evidence>
<evidence type="ECO:0000269" key="6">
    <source>
    </source>
</evidence>
<evidence type="ECO:0000303" key="7">
    <source>
    </source>
</evidence>
<evidence type="ECO:0000303" key="8">
    <source>
    </source>
</evidence>
<evidence type="ECO:0000303" key="9">
    <source>
    </source>
</evidence>
<evidence type="ECO:0000303" key="10">
    <source ref="1"/>
</evidence>
<evidence type="ECO:0000303" key="11">
    <source ref="2"/>
</evidence>
<evidence type="ECO:0000305" key="12"/>
<evidence type="ECO:0000312" key="13">
    <source>
        <dbReference type="HGNC" id="HGNC:30402"/>
    </source>
</evidence>
<evidence type="ECO:0007744" key="14">
    <source>
    </source>
</evidence>
<evidence type="ECO:0007744" key="15">
    <source>
    </source>
</evidence>
<evidence type="ECO:0007744" key="16">
    <source>
    </source>
</evidence>
<evidence type="ECO:0007829" key="17">
    <source>
        <dbReference type="PDB" id="7R2E"/>
    </source>
</evidence>
<organism>
    <name type="scientific">Homo sapiens</name>
    <name type="common">Human</name>
    <dbReference type="NCBI Taxonomy" id="9606"/>
    <lineage>
        <taxon>Eukaryota</taxon>
        <taxon>Metazoa</taxon>
        <taxon>Chordata</taxon>
        <taxon>Craniata</taxon>
        <taxon>Vertebrata</taxon>
        <taxon>Euteleostomi</taxon>
        <taxon>Mammalia</taxon>
        <taxon>Eutheria</taxon>
        <taxon>Euarchontoglires</taxon>
        <taxon>Primates</taxon>
        <taxon>Haplorrhini</taxon>
        <taxon>Catarrhini</taxon>
        <taxon>Hominidae</taxon>
        <taxon>Homo</taxon>
    </lineage>
</organism>
<reference key="1">
    <citation type="submission" date="1999-10" db="EMBL/GenBank/DDBJ databases">
        <authorList>
            <person name="Choi S.J."/>
            <person name="Jeon Y.-J."/>
            <person name="Kim K.I."/>
            <person name="Nishimori S."/>
            <person name="Suzuki T."/>
            <person name="Uchida S."/>
            <person name="Shimbara N."/>
            <person name="Tanaka K."/>
            <person name="Chung C.H."/>
        </authorList>
    </citation>
    <scope>NUCLEOTIDE SEQUENCE [MRNA] (ISOFORM 2)</scope>
</reference>
<reference key="2">
    <citation type="submission" date="1999-12" db="EMBL/GenBank/DDBJ databases">
        <title>SENP7, a novel human sentrin-specific protease.</title>
        <authorList>
            <person name="Gong L."/>
            <person name="Yeh E.T.H."/>
        </authorList>
    </citation>
    <scope>NUCLEOTIDE SEQUENCE [MRNA] (ISOFORM 3)</scope>
    <source>
        <tissue>Placenta</tissue>
    </source>
</reference>
<reference key="3">
    <citation type="journal article" date="2001" name="Genome Res.">
        <title>Towards a catalog of human genes and proteins: sequencing and analysis of 500 novel complete protein coding human cDNAs.</title>
        <authorList>
            <person name="Wiemann S."/>
            <person name="Weil B."/>
            <person name="Wellenreuther R."/>
            <person name="Gassenhuber J."/>
            <person name="Glassl S."/>
            <person name="Ansorge W."/>
            <person name="Boecher M."/>
            <person name="Bloecker H."/>
            <person name="Bauersachs S."/>
            <person name="Blum H."/>
            <person name="Lauber J."/>
            <person name="Duesterhoeft A."/>
            <person name="Beyer A."/>
            <person name="Koehrer K."/>
            <person name="Strack N."/>
            <person name="Mewes H.-W."/>
            <person name="Ottenwaelder B."/>
            <person name="Obermaier B."/>
            <person name="Tampe J."/>
            <person name="Heubner D."/>
            <person name="Wambutt R."/>
            <person name="Korn B."/>
            <person name="Klein M."/>
            <person name="Poustka A."/>
        </authorList>
    </citation>
    <scope>NUCLEOTIDE SEQUENCE [LARGE SCALE MRNA] (ISOFORM 5)</scope>
    <source>
        <tissue>Brain</tissue>
    </source>
</reference>
<reference key="4">
    <citation type="journal article" date="2007" name="BMC Genomics">
        <title>The full-ORF clone resource of the German cDNA consortium.</title>
        <authorList>
            <person name="Bechtel S."/>
            <person name="Rosenfelder H."/>
            <person name="Duda A."/>
            <person name="Schmidt C.P."/>
            <person name="Ernst U."/>
            <person name="Wellenreuther R."/>
            <person name="Mehrle A."/>
            <person name="Schuster C."/>
            <person name="Bahr A."/>
            <person name="Bloecker H."/>
            <person name="Heubner D."/>
            <person name="Hoerlein A."/>
            <person name="Michel G."/>
            <person name="Wedler H."/>
            <person name="Koehrer K."/>
            <person name="Ottenwaelder B."/>
            <person name="Poustka A."/>
            <person name="Wiemann S."/>
            <person name="Schupp I."/>
        </authorList>
    </citation>
    <scope>NUCLEOTIDE SEQUENCE [LARGE SCALE MRNA] (ISOFORM 4)</scope>
    <source>
        <tissue>Fetal kidney</tissue>
    </source>
</reference>
<reference key="5">
    <citation type="journal article" date="2006" name="Nature">
        <title>The DNA sequence, annotation and analysis of human chromosome 3.</title>
        <authorList>
            <person name="Muzny D.M."/>
            <person name="Scherer S.E."/>
            <person name="Kaul R."/>
            <person name="Wang J."/>
            <person name="Yu J."/>
            <person name="Sudbrak R."/>
            <person name="Buhay C.J."/>
            <person name="Chen R."/>
            <person name="Cree A."/>
            <person name="Ding Y."/>
            <person name="Dugan-Rocha S."/>
            <person name="Gill R."/>
            <person name="Gunaratne P."/>
            <person name="Harris R.A."/>
            <person name="Hawes A.C."/>
            <person name="Hernandez J."/>
            <person name="Hodgson A.V."/>
            <person name="Hume J."/>
            <person name="Jackson A."/>
            <person name="Khan Z.M."/>
            <person name="Kovar-Smith C."/>
            <person name="Lewis L.R."/>
            <person name="Lozado R.J."/>
            <person name="Metzker M.L."/>
            <person name="Milosavljevic A."/>
            <person name="Miner G.R."/>
            <person name="Morgan M.B."/>
            <person name="Nazareth L.V."/>
            <person name="Scott G."/>
            <person name="Sodergren E."/>
            <person name="Song X.-Z."/>
            <person name="Steffen D."/>
            <person name="Wei S."/>
            <person name="Wheeler D.A."/>
            <person name="Wright M.W."/>
            <person name="Worley K.C."/>
            <person name="Yuan Y."/>
            <person name="Zhang Z."/>
            <person name="Adams C.Q."/>
            <person name="Ansari-Lari M.A."/>
            <person name="Ayele M."/>
            <person name="Brown M.J."/>
            <person name="Chen G."/>
            <person name="Chen Z."/>
            <person name="Clendenning J."/>
            <person name="Clerc-Blankenburg K.P."/>
            <person name="Chen R."/>
            <person name="Chen Z."/>
            <person name="Davis C."/>
            <person name="Delgado O."/>
            <person name="Dinh H.H."/>
            <person name="Dong W."/>
            <person name="Draper H."/>
            <person name="Ernst S."/>
            <person name="Fu G."/>
            <person name="Gonzalez-Garay M.L."/>
            <person name="Garcia D.K."/>
            <person name="Gillett W."/>
            <person name="Gu J."/>
            <person name="Hao B."/>
            <person name="Haugen E."/>
            <person name="Havlak P."/>
            <person name="He X."/>
            <person name="Hennig S."/>
            <person name="Hu S."/>
            <person name="Huang W."/>
            <person name="Jackson L.R."/>
            <person name="Jacob L.S."/>
            <person name="Kelly S.H."/>
            <person name="Kube M."/>
            <person name="Levy R."/>
            <person name="Li Z."/>
            <person name="Liu B."/>
            <person name="Liu J."/>
            <person name="Liu W."/>
            <person name="Lu J."/>
            <person name="Maheshwari M."/>
            <person name="Nguyen B.-V."/>
            <person name="Okwuonu G.O."/>
            <person name="Palmeiri A."/>
            <person name="Pasternak S."/>
            <person name="Perez L.M."/>
            <person name="Phelps K.A."/>
            <person name="Plopper F.J."/>
            <person name="Qiang B."/>
            <person name="Raymond C."/>
            <person name="Rodriguez R."/>
            <person name="Saenphimmachak C."/>
            <person name="Santibanez J."/>
            <person name="Shen H."/>
            <person name="Shen Y."/>
            <person name="Subramanian S."/>
            <person name="Tabor P.E."/>
            <person name="Verduzco D."/>
            <person name="Waldron L."/>
            <person name="Wang J."/>
            <person name="Wang J."/>
            <person name="Wang Q."/>
            <person name="Williams G.A."/>
            <person name="Wong G.K.-S."/>
            <person name="Yao Z."/>
            <person name="Zhang J."/>
            <person name="Zhang X."/>
            <person name="Zhao G."/>
            <person name="Zhou J."/>
            <person name="Zhou Y."/>
            <person name="Nelson D."/>
            <person name="Lehrach H."/>
            <person name="Reinhardt R."/>
            <person name="Naylor S.L."/>
            <person name="Yang H."/>
            <person name="Olson M."/>
            <person name="Weinstock G."/>
            <person name="Gibbs R.A."/>
        </authorList>
    </citation>
    <scope>NUCLEOTIDE SEQUENCE [LARGE SCALE GENOMIC DNA]</scope>
</reference>
<reference key="6">
    <citation type="journal article" date="2004" name="Genome Res.">
        <title>The status, quality, and expansion of the NIH full-length cDNA project: the Mammalian Gene Collection (MGC).</title>
        <authorList>
            <consortium name="The MGC Project Team"/>
        </authorList>
    </citation>
    <scope>NUCLEOTIDE SEQUENCE [LARGE SCALE MRNA] (ISOFORM 1)</scope>
</reference>
<reference key="7">
    <citation type="journal article" date="2000" name="DNA Res.">
        <title>Prediction of the coding sequences of unidentified human genes. XIX. The complete sequences of 100 new cDNA clones from brain which code for large proteins in vitro.</title>
        <authorList>
            <person name="Nagase T."/>
            <person name="Kikuno R."/>
            <person name="Hattori A."/>
            <person name="Kondo Y."/>
            <person name="Okumura K."/>
            <person name="Ohara O."/>
        </authorList>
    </citation>
    <scope>NUCLEOTIDE SEQUENCE [LARGE SCALE MRNA] OF 295-1050</scope>
    <scope>VARIANT HIS-612</scope>
    <source>
        <tissue>Brain</tissue>
    </source>
</reference>
<reference key="8">
    <citation type="journal article" date="2006" name="Cell">
        <title>Global, in vivo, and site-specific phosphorylation dynamics in signaling networks.</title>
        <authorList>
            <person name="Olsen J.V."/>
            <person name="Blagoev B."/>
            <person name="Gnad F."/>
            <person name="Macek B."/>
            <person name="Kumar C."/>
            <person name="Mortensen P."/>
            <person name="Mann M."/>
        </authorList>
    </citation>
    <scope>IDENTIFICATION BY MASS SPECTROMETRY [LARGE SCALE ANALYSIS]</scope>
    <source>
        <tissue>Cervix carcinoma</tissue>
    </source>
</reference>
<reference key="9">
    <citation type="journal article" date="2009" name="Sci. Signal.">
        <title>Quantitative phosphoproteomic analysis of T cell receptor signaling reveals system-wide modulation of protein-protein interactions.</title>
        <authorList>
            <person name="Mayya V."/>
            <person name="Lundgren D.H."/>
            <person name="Hwang S.-I."/>
            <person name="Rezaul K."/>
            <person name="Wu L."/>
            <person name="Eng J.K."/>
            <person name="Rodionov V."/>
            <person name="Han D.K."/>
        </authorList>
    </citation>
    <scope>PHOSPHORYLATION [LARGE SCALE ANALYSIS] AT SER-25; SER-443 AND SER-444</scope>
    <scope>IDENTIFICATION BY MASS SPECTROMETRY [LARGE SCALE ANALYSIS]</scope>
    <source>
        <tissue>Leukemic T-cell</tissue>
    </source>
</reference>
<reference key="10">
    <citation type="journal article" date="2013" name="J. Proteome Res.">
        <title>Toward a comprehensive characterization of a human cancer cell phosphoproteome.</title>
        <authorList>
            <person name="Zhou H."/>
            <person name="Di Palma S."/>
            <person name="Preisinger C."/>
            <person name="Peng M."/>
            <person name="Polat A.N."/>
            <person name="Heck A.J."/>
            <person name="Mohammed S."/>
        </authorList>
    </citation>
    <scope>PHOSPHORYLATION [LARGE SCALE ANALYSIS] AT SER-11; SER-373; SER-443 AND SER-444</scope>
    <scope>IDENTIFICATION BY MASS SPECTROMETRY [LARGE SCALE ANALYSIS]</scope>
    <source>
        <tissue>Cervix carcinoma</tissue>
        <tissue>Erythroleukemia</tissue>
    </source>
</reference>
<reference key="11">
    <citation type="journal article" date="2014" name="J. Proteomics">
        <title>An enzyme assisted RP-RPLC approach for in-depth analysis of human liver phosphoproteome.</title>
        <authorList>
            <person name="Bian Y."/>
            <person name="Song C."/>
            <person name="Cheng K."/>
            <person name="Dong M."/>
            <person name="Wang F."/>
            <person name="Huang J."/>
            <person name="Sun D."/>
            <person name="Wang L."/>
            <person name="Ye M."/>
            <person name="Zou H."/>
        </authorList>
    </citation>
    <scope>PHOSPHORYLATION [LARGE SCALE ANALYSIS] AT SER-433</scope>
    <scope>IDENTIFICATION BY MASS SPECTROMETRY [LARGE SCALE ANALYSIS]</scope>
    <source>
        <tissue>Liver</tissue>
    </source>
</reference>
<reference key="12">
    <citation type="journal article" date="2008" name="J. Biol. Chem.">
        <title>Structure of the human SENP7 catalytic domain and poly-SUMO deconjugation activities for SENP6 and SENP7.</title>
        <authorList>
            <person name="Lima C.D."/>
            <person name="Reverter D."/>
        </authorList>
    </citation>
    <scope>X-RAY CRYSTALLOGRAPHY (2.4 ANGSTROMS) OF 728-1050</scope>
    <scope>FUNCTION</scope>
    <scope>MUTAGENESIS OF PHE-775 AND VAL-779</scope>
</reference>
<sequence>MDKRKLGRRPSSSEIITEGKRKKSSSDLSEIRKMLNAKPEDVHVQSPLSKFRSSERWTLPLQWERSLRNKVISLDHKNKKHIRGCPVTSKSSPERQLKVMLTNVLWTDLGRKFRKTLPRNDANLCDANKVQSDSLPSTSVDSLETCQKLEPLRQSLNLSERIPRVILTNVLGTELGRKYIRTPPVTEGSLSDTDNLQSEQLSSSSDGSLESYQNLNPHKSCYLSERGSQRSKTVDDNSAKQTAHNKEKRRKDDGISLLISDTQPEDLNSGSRGCDHLEQESRNKDVKYSDSKVELTLISRKTKRRLRNNLPDSQYCTSLDKSTEQTKKQEDDSTISTEFEKPSENYHQDPKLPEEITTKPTKSDFTKLSSLNSQELTLSNATKSASAGSTTETVENSNSIDIVGISSLVEKDENELNTIEKPILRGHNEGNQSLISAEPIVVSSDEEGPVEHKSSEILKLQSKQDRETTNENESTSESALLELPLITCESVQMSSELCPYNPVMENISSIMPSNEMDLQLDFIFTSVYIGKIKGASKGCVTITKKYIKIPFQVSLNEISLLVDTTHLKRFGLWKSKDDNHSKRSHAILFFWVSSDYLQEIQTQLEHSVLSQQSKSSEFIFLELHNPVSQREELKLKDIMTEISIISGELELSYPLSWVQAFPLFQNLSSKESSFIHYYCVSTCSFPAGVAVAEEMKLKSVSQPSNTDAAKPTYTFLQKQSSGCYSLSITSNPDEEWREVRHTGLVQKLIVYPPPPTKGGLGVTNEDLECLEEGEFLNDVIIDFYLKYLILEKASDELVERSHIFSSFFYKCLTRKENNLTEDNPNLSMAQRRHKRVRTWTRHINIFNKDYIFVPVNESSHWYLAVICFPWLEEAVYEDFPQTVSQQSQAQQSQNDNKTIDNDLRTTSTLSLSAEDSQSTESNMSVPKKMCKRPCILILDSLKAASVQNTVQNLREYLEVEWEVKLKTHRQFSKTNMVDLCPKVPKQDNSSDCGVYLLQYVESFFKDPIVNFELPIHLEKWFPRHVIKTKREDIRELILKLHLQQQKGSSS</sequence>
<gene>
    <name evidence="11 13" type="primary">SENP7</name>
    <name evidence="7" type="synonym">KIAA1707</name>
    <name type="synonym">SSP2</name>
    <name type="synonym">SUSP2</name>
</gene>
<comment type="function">
    <text evidence="2 6">Protease that acts as a positive regulator of the cGAS-STING pathway by catalyzing desumoylation of CGAS. Desumoylation of CGAS promotes DNA-binding activity of CGAS, subsequent oligomerization and activation (By similarity). Deconjugates SUMO2 and SUMO3 from targeted proteins, but not SUMO1 (PubMed:18799455). Catalyzes the deconjugation of poly-SUMO2 and poly-SUMO3 chains (PubMed:18799455). Has very low efficiency in processing full-length SUMO proteins to their mature forms (PubMed:18799455).</text>
</comment>
<comment type="interaction">
    <interactant intactId="EBI-766251">
        <id>Q9BQF6</id>
    </interactant>
    <interactant intactId="EBI-78219">
        <id>P45973</id>
        <label>CBX5</label>
    </interactant>
    <organismsDiffer>false</organismsDiffer>
    <experiments>4</experiments>
</comment>
<comment type="interaction">
    <interactant intactId="EBI-766251">
        <id>Q9BQF6</id>
    </interactant>
    <interactant intactId="EBI-78139">
        <id>Q13263</id>
        <label>TRIM28</label>
    </interactant>
    <organismsDiffer>false</organismsDiffer>
    <experiments>3</experiments>
</comment>
<comment type="subcellular location">
    <subcellularLocation>
        <location evidence="2">Cytoplasm</location>
    </subcellularLocation>
</comment>
<comment type="alternative products">
    <event type="alternative splicing"/>
    <isoform>
        <id>Q9BQF6-1</id>
        <name>1</name>
        <sequence type="displayed"/>
    </isoform>
    <isoform>
        <id>Q9BQF6-2</id>
        <name>2</name>
        <sequence type="described" ref="VSP_039499"/>
    </isoform>
    <isoform>
        <id>Q9BQF6-3</id>
        <name>3</name>
        <sequence type="described" ref="VSP_039498 VSP_039502"/>
    </isoform>
    <isoform>
        <id>Q9BQF6-4</id>
        <name>4</name>
        <sequence type="described" ref="VSP_039499 VSP_039501"/>
    </isoform>
    <isoform>
        <id>Q9BQF6-5</id>
        <name>5</name>
        <sequence type="described" ref="VSP_039500"/>
    </isoform>
    <text>Experimental confirmation may be lacking for some isoforms.</text>
</comment>
<comment type="similarity">
    <text evidence="12">Belongs to the peptidase C48 family.</text>
</comment>
<protein>
    <recommendedName>
        <fullName evidence="12">Sentrin-specific protease 7</fullName>
        <ecNumber evidence="6">3.4.22.-</ecNumber>
    </recommendedName>
    <alternativeName>
        <fullName>SUMO-1-specific protease 2</fullName>
    </alternativeName>
    <alternativeName>
        <fullName>Sentrin/SUMO-specific protease SENP7</fullName>
    </alternativeName>
</protein>
<name>SENP7_HUMAN</name>
<feature type="chain" id="PRO_0000101726" description="Sentrin-specific protease 7">
    <location>
        <begin position="1"/>
        <end position="1050"/>
    </location>
</feature>
<feature type="region of interest" description="Disordered" evidence="4">
    <location>
        <begin position="1"/>
        <end position="28"/>
    </location>
</feature>
<feature type="region of interest" description="Disordered" evidence="4">
    <location>
        <begin position="183"/>
        <end position="288"/>
    </location>
</feature>
<feature type="region of interest" description="Disordered" evidence="4">
    <location>
        <begin position="304"/>
        <end position="365"/>
    </location>
</feature>
<feature type="region of interest" description="Disordered" evidence="4">
    <location>
        <begin position="443"/>
        <end position="476"/>
    </location>
</feature>
<feature type="region of interest" description="Protease" evidence="3">
    <location>
        <begin position="760"/>
        <end position="1050"/>
    </location>
</feature>
<feature type="compositionally biased region" description="Low complexity" evidence="4">
    <location>
        <begin position="196"/>
        <end position="211"/>
    </location>
</feature>
<feature type="compositionally biased region" description="Polar residues" evidence="4">
    <location>
        <begin position="259"/>
        <end position="271"/>
    </location>
</feature>
<feature type="compositionally biased region" description="Basic and acidic residues" evidence="4">
    <location>
        <begin position="273"/>
        <end position="288"/>
    </location>
</feature>
<feature type="compositionally biased region" description="Polar residues" evidence="4">
    <location>
        <begin position="310"/>
        <end position="320"/>
    </location>
</feature>
<feature type="compositionally biased region" description="Basic and acidic residues" evidence="4">
    <location>
        <begin position="321"/>
        <end position="331"/>
    </location>
</feature>
<feature type="compositionally biased region" description="Basic and acidic residues" evidence="4">
    <location>
        <begin position="338"/>
        <end position="365"/>
    </location>
</feature>
<feature type="compositionally biased region" description="Basic and acidic residues" evidence="4">
    <location>
        <begin position="449"/>
        <end position="469"/>
    </location>
</feature>
<feature type="active site" evidence="3">
    <location>
        <position position="860"/>
    </location>
</feature>
<feature type="active site" evidence="3">
    <location>
        <position position="939"/>
    </location>
</feature>
<feature type="active site" description="Nucleophile" evidence="3">
    <location>
        <position position="992"/>
    </location>
</feature>
<feature type="modified residue" description="Phosphoserine" evidence="15">
    <location>
        <position position="11"/>
    </location>
</feature>
<feature type="modified residue" description="Phosphoserine" evidence="2">
    <location>
        <position position="12"/>
    </location>
</feature>
<feature type="modified residue" description="Phosphoserine" evidence="1">
    <location>
        <position position="13"/>
    </location>
</feature>
<feature type="modified residue" description="Phosphoserine" evidence="14">
    <location>
        <position position="25"/>
    </location>
</feature>
<feature type="modified residue" description="Phosphoserine" evidence="15">
    <location>
        <position position="373"/>
    </location>
</feature>
<feature type="modified residue" description="Phosphoserine" evidence="16">
    <location>
        <position position="433"/>
    </location>
</feature>
<feature type="modified residue" description="Phosphoserine" evidence="14 15">
    <location>
        <position position="443"/>
    </location>
</feature>
<feature type="modified residue" description="Phosphoserine" evidence="14 15">
    <location>
        <position position="444"/>
    </location>
</feature>
<feature type="splice variant" id="VSP_039498" description="In isoform 3." evidence="11">
    <location>
        <begin position="1"/>
        <end position="812"/>
    </location>
</feature>
<feature type="splice variant" id="VSP_039499" description="In isoform 2 and isoform 4." evidence="9 10">
    <location>
        <begin position="1"/>
        <end position="33"/>
    </location>
</feature>
<feature type="splice variant" id="VSP_039501" description="In isoform 4." evidence="9">
    <location>
        <begin position="95"/>
        <end position="225"/>
    </location>
</feature>
<feature type="splice variant" id="VSP_039500" description="In isoform 5." evidence="8">
    <location>
        <begin position="95"/>
        <end position="160"/>
    </location>
</feature>
<feature type="splice variant" id="VSP_039502" description="In isoform 3." evidence="11">
    <original>TRKENNLTEDNPNLS</original>
    <variation>MKKFLYIKSVFHTLR</variation>
    <location>
        <begin position="813"/>
        <end position="827"/>
    </location>
</feature>
<feature type="sequence variant" id="VAR_029651" description="In dbSNP:rs6809436.">
    <original>K</original>
    <variation>Q</variation>
    <location>
        <position position="79"/>
    </location>
</feature>
<feature type="sequence variant" id="VAR_029652" description="In dbSNP:rs2433031." evidence="5">
    <original>Q</original>
    <variation>H</variation>
    <location>
        <position position="612"/>
    </location>
</feature>
<feature type="mutagenesis site" description="Slightly increased deconjugation activity." evidence="6">
    <original>F</original>
    <variation>W</variation>
    <location>
        <position position="775"/>
    </location>
</feature>
<feature type="mutagenesis site" description="Reduces deconjugation activity." evidence="6">
    <original>V</original>
    <variation>E</variation>
    <location>
        <position position="779"/>
    </location>
</feature>
<feature type="sequence conflict" description="In Ref. 3; CAB66534." evidence="12" ref="3">
    <original>K</original>
    <variation>R</variation>
    <location>
        <position position="90"/>
    </location>
</feature>
<feature type="sequence conflict" description="In Ref. 3; CAB66534." evidence="12" ref="3">
    <original>K</original>
    <variation>R</variation>
    <location>
        <position position="341"/>
    </location>
</feature>
<feature type="sequence conflict" description="In Ref. 3; CAB66534." evidence="12" ref="3">
    <original>N</original>
    <variation>Y</variation>
    <location>
        <position position="396"/>
    </location>
</feature>
<feature type="sequence conflict" description="In Ref. 1; AAL25651." evidence="12" ref="1">
    <original>L</original>
    <variation>H</variation>
    <location>
        <position position="785"/>
    </location>
</feature>
<feature type="sequence conflict" description="In Ref. 3; CAB66534." evidence="12" ref="3">
    <original>N</original>
    <variation>S</variation>
    <location>
        <position position="894"/>
    </location>
</feature>
<feature type="sequence conflict" description="In Ref. 3; CAB66534." evidence="12" ref="3">
    <original>Q</original>
    <variation>R</variation>
    <location>
        <position position="947"/>
    </location>
</feature>
<feature type="sequence conflict" description="In Ref. 1; AAL25651." evidence="12" ref="1">
    <original>D</original>
    <variation>N</variation>
    <location>
        <position position="1006"/>
    </location>
</feature>
<feature type="strand" evidence="17">
    <location>
        <begin position="747"/>
        <end position="752"/>
    </location>
</feature>
<feature type="strand" evidence="17">
    <location>
        <begin position="756"/>
        <end position="758"/>
    </location>
</feature>
<feature type="strand" evidence="17">
    <location>
        <begin position="760"/>
        <end position="763"/>
    </location>
</feature>
<feature type="helix" evidence="17">
    <location>
        <begin position="764"/>
        <end position="767"/>
    </location>
</feature>
<feature type="helix" evidence="17">
    <location>
        <begin position="768"/>
        <end position="770"/>
    </location>
</feature>
<feature type="helix" evidence="17">
    <location>
        <begin position="778"/>
        <end position="791"/>
    </location>
</feature>
<feature type="helix" evidence="17">
    <location>
        <begin position="795"/>
        <end position="800"/>
    </location>
</feature>
<feature type="strand" evidence="17">
    <location>
        <begin position="801"/>
        <end position="803"/>
    </location>
</feature>
<feature type="helix" evidence="17">
    <location>
        <begin position="808"/>
        <end position="812"/>
    </location>
</feature>
<feature type="helix" evidence="17">
    <location>
        <begin position="828"/>
        <end position="835"/>
    </location>
</feature>
<feature type="helix" evidence="17">
    <location>
        <begin position="836"/>
        <end position="840"/>
    </location>
</feature>
<feature type="helix" evidence="17">
    <location>
        <begin position="845"/>
        <end position="847"/>
    </location>
</feature>
<feature type="strand" evidence="17">
    <location>
        <begin position="849"/>
        <end position="856"/>
    </location>
</feature>
<feature type="strand" evidence="17">
    <location>
        <begin position="861"/>
        <end position="867"/>
    </location>
</feature>
<feature type="strand" evidence="17">
    <location>
        <begin position="934"/>
        <end position="938"/>
    </location>
</feature>
<feature type="helix" evidence="17">
    <location>
        <begin position="946"/>
        <end position="965"/>
    </location>
</feature>
<feature type="turn" evidence="17">
    <location>
        <begin position="973"/>
        <end position="975"/>
    </location>
</feature>
<feature type="strand" evidence="17">
    <location>
        <begin position="976"/>
        <end position="979"/>
    </location>
</feature>
<feature type="strand" evidence="17">
    <location>
        <begin position="987"/>
        <end position="990"/>
    </location>
</feature>
<feature type="helix" evidence="17">
    <location>
        <begin position="992"/>
        <end position="1005"/>
    </location>
</feature>
<feature type="helix" evidence="17">
    <location>
        <begin position="1023"/>
        <end position="1027"/>
    </location>
</feature>
<feature type="helix" evidence="17">
    <location>
        <begin position="1029"/>
        <end position="1046"/>
    </location>
</feature>
<proteinExistence type="evidence at protein level"/>
<keyword id="KW-0002">3D-structure</keyword>
<keyword id="KW-0025">Alternative splicing</keyword>
<keyword id="KW-0963">Cytoplasm</keyword>
<keyword id="KW-0378">Hydrolase</keyword>
<keyword id="KW-0391">Immunity</keyword>
<keyword id="KW-0399">Innate immunity</keyword>
<keyword id="KW-0597">Phosphoprotein</keyword>
<keyword id="KW-0645">Protease</keyword>
<keyword id="KW-1267">Proteomics identification</keyword>
<keyword id="KW-1185">Reference proteome</keyword>
<keyword id="KW-0788">Thiol protease</keyword>
<keyword id="KW-0833">Ubl conjugation pathway</keyword>
<accession>Q9BQF6</accession>
<accession>A1L3A5</accession>
<accession>A8MW39</accession>
<accession>B7WNW8</accession>
<accession>Q7Z3F4</accession>
<accession>Q96PS5</accession>
<accession>Q9C0F6</accession>
<accession>Q9HBT5</accession>